<organism>
    <name type="scientific">Rice dwarf virus (isolate Akita)</name>
    <name type="common">RDV</name>
    <dbReference type="NCBI Taxonomy" id="142803"/>
    <lineage>
        <taxon>Viruses</taxon>
        <taxon>Riboviria</taxon>
        <taxon>Orthornavirae</taxon>
        <taxon>Duplornaviricota</taxon>
        <taxon>Resentoviricetes</taxon>
        <taxon>Reovirales</taxon>
        <taxon>Sedoreoviridae</taxon>
        <taxon>Phytoreovirus</taxon>
        <taxon>Rice dwarf virus</taxon>
    </lineage>
</organism>
<organismHost>
    <name type="scientific">Alopecurus aequalis</name>
    <dbReference type="NCBI Taxonomy" id="114194"/>
</organismHost>
<organismHost>
    <name type="scientific">Echinochloa crus-galli</name>
    <name type="common">Barnyard grass</name>
    <name type="synonym">Panicum crus-galli</name>
    <dbReference type="NCBI Taxonomy" id="90397"/>
</organismHost>
<organismHost>
    <name type="scientific">Nephotettix cincticeps</name>
    <name type="common">Green rice leafhopper</name>
    <name type="synonym">Selenocephalus cincticeps</name>
    <dbReference type="NCBI Taxonomy" id="94400"/>
</organismHost>
<organismHost>
    <name type="scientific">Oryza sativa</name>
    <name type="common">Rice</name>
    <dbReference type="NCBI Taxonomy" id="4530"/>
</organismHost>
<organismHost>
    <name type="scientific">Paspalum</name>
    <dbReference type="NCBI Taxonomy" id="147271"/>
</organismHost>
<feature type="chain" id="PRO_0000222777" description="RNA-directed RNA polymerase P1">
    <location>
        <begin position="1"/>
        <end position="1444"/>
    </location>
</feature>
<feature type="domain" description="RdRp catalytic" evidence="2">
    <location>
        <begin position="690"/>
        <end position="897"/>
    </location>
</feature>
<feature type="region of interest" description="Disordered" evidence="3">
    <location>
        <begin position="157"/>
        <end position="181"/>
    </location>
</feature>
<feature type="sequence variant" description="In strain: Isolate H.">
    <original>I</original>
    <variation>V</variation>
    <location>
        <position position="9"/>
    </location>
</feature>
<feature type="sequence variant" description="In strain: Isolate H.">
    <original>K</original>
    <variation>E</variation>
    <location>
        <position position="92"/>
    </location>
</feature>
<feature type="sequence variant" description="In strain: Isolate H.">
    <original>K</original>
    <variation>R</variation>
    <location>
        <position position="100"/>
    </location>
</feature>
<feature type="sequence variant" description="In strain: Isolate H.">
    <original>V</original>
    <variation>A</variation>
    <location>
        <position position="152"/>
    </location>
</feature>
<feature type="sequence variant" description="In strain: Isolate H.">
    <original>C</original>
    <variation>V</variation>
    <location>
        <position position="225"/>
    </location>
</feature>
<feature type="sequence variant" description="In strain: Isolate H.">
    <original>L</original>
    <variation>I</variation>
    <location>
        <position position="244"/>
    </location>
</feature>
<feature type="sequence variant" description="In strain: Isolate H.">
    <original>S</original>
    <variation>R</variation>
    <location>
        <position position="279"/>
    </location>
</feature>
<feature type="sequence variant" description="In strain: Isolate H.">
    <original>N</original>
    <variation>S</variation>
    <location>
        <position position="323"/>
    </location>
</feature>
<feature type="sequence variant" description="In strain: Isolate H.">
    <original>N</original>
    <variation>S</variation>
    <location>
        <position position="426"/>
    </location>
</feature>
<feature type="sequence variant" description="In strain: Isolate H.">
    <original>M</original>
    <variation>T</variation>
    <location>
        <position position="445"/>
    </location>
</feature>
<feature type="sequence variant" description="In strain: Isolate H.">
    <original>I</original>
    <variation>T</variation>
    <location>
        <position position="502"/>
    </location>
</feature>
<feature type="sequence variant" description="In strain: Isolate H.">
    <original>S</original>
    <variation>T</variation>
    <location>
        <position position="726"/>
    </location>
</feature>
<feature type="sequence variant" description="In strain: Isolate H.">
    <original>K</original>
    <variation>R</variation>
    <location>
        <position position="746"/>
    </location>
</feature>
<feature type="sequence variant" description="In strain: Isolate H.">
    <original>K</original>
    <variation>R</variation>
    <location>
        <position position="773"/>
    </location>
</feature>
<feature type="sequence variant" description="In strain: Isolate H.">
    <original>K</original>
    <variation>R</variation>
    <location>
        <position position="1332"/>
    </location>
</feature>
<feature type="sequence variant" description="In strain: Isolate H.">
    <original>L</original>
    <variation>F</variation>
    <location>
        <position position="1369"/>
    </location>
</feature>
<name>RDRP_RDVA</name>
<keyword id="KW-1035">Host cytoplasm</keyword>
<keyword id="KW-0547">Nucleotide-binding</keyword>
<keyword id="KW-0548">Nucleotidyltransferase</keyword>
<keyword id="KW-0696">RNA-directed RNA polymerase</keyword>
<keyword id="KW-0808">Transferase</keyword>
<keyword id="KW-0693">Viral RNA replication</keyword>
<keyword id="KW-0946">Virion</keyword>
<comment type="function">
    <text evidence="2">RNA-directed RNA polymerase that is involved in both transcription and genome replication. Together with the capping enzyme P5 and protein P7, forms an enzyme complex positioned near the channels situated at each of the five-fold vertices of the core (By similarity).</text>
</comment>
<comment type="catalytic activity">
    <reaction evidence="2">
        <text>RNA(n) + a ribonucleoside 5'-triphosphate = RNA(n+1) + diphosphate</text>
        <dbReference type="Rhea" id="RHEA:21248"/>
        <dbReference type="Rhea" id="RHEA-COMP:14527"/>
        <dbReference type="Rhea" id="RHEA-COMP:17342"/>
        <dbReference type="ChEBI" id="CHEBI:33019"/>
        <dbReference type="ChEBI" id="CHEBI:61557"/>
        <dbReference type="ChEBI" id="CHEBI:140395"/>
        <dbReference type="EC" id="2.7.7.48"/>
    </reaction>
</comment>
<comment type="subcellular location">
    <subcellularLocation>
        <location evidence="1">Virion</location>
    </subcellularLocation>
    <subcellularLocation>
        <location evidence="1">Host cytoplasm</location>
    </subcellularLocation>
    <text evidence="1">Located inside the inner capsid. Found in the interior of spherical cytoplasmic structures, called virus factories, that appear early after infection and are the site of viral replication and packaging.</text>
</comment>
<comment type="similarity">
    <text evidence="4">Belongs to the reoviridae RNA-directed RNA polymerase family.</text>
</comment>
<accession>Q02119</accession>
<dbReference type="EC" id="2.7.7.48"/>
<dbReference type="EMBL" id="D90198">
    <property type="protein sequence ID" value="BAA14222.1"/>
    <property type="molecule type" value="Genomic_RNA"/>
</dbReference>
<dbReference type="EMBL" id="D10222">
    <property type="protein sequence ID" value="BAA01074.1"/>
    <property type="molecule type" value="mRNA"/>
</dbReference>
<dbReference type="PIR" id="A43377">
    <property type="entry name" value="A43377"/>
</dbReference>
<dbReference type="GO" id="GO:0030430">
    <property type="term" value="C:host cell cytoplasm"/>
    <property type="evidence" value="ECO:0007669"/>
    <property type="project" value="UniProtKB-SubCell"/>
</dbReference>
<dbReference type="GO" id="GO:0044423">
    <property type="term" value="C:virion component"/>
    <property type="evidence" value="ECO:0007669"/>
    <property type="project" value="UniProtKB-KW"/>
</dbReference>
<dbReference type="GO" id="GO:0000166">
    <property type="term" value="F:nucleotide binding"/>
    <property type="evidence" value="ECO:0007669"/>
    <property type="project" value="UniProtKB-KW"/>
</dbReference>
<dbReference type="GO" id="GO:0003723">
    <property type="term" value="F:RNA binding"/>
    <property type="evidence" value="ECO:0007669"/>
    <property type="project" value="InterPro"/>
</dbReference>
<dbReference type="GO" id="GO:0003968">
    <property type="term" value="F:RNA-directed RNA polymerase activity"/>
    <property type="evidence" value="ECO:0007669"/>
    <property type="project" value="UniProtKB-KW"/>
</dbReference>
<dbReference type="GO" id="GO:0019079">
    <property type="term" value="P:viral genome replication"/>
    <property type="evidence" value="ECO:0007669"/>
    <property type="project" value="InterPro"/>
</dbReference>
<dbReference type="InterPro" id="IPR043502">
    <property type="entry name" value="DNA/RNA_pol_sf"/>
</dbReference>
<dbReference type="InterPro" id="IPR007097">
    <property type="entry name" value="RNA-dir_pol_reovirus"/>
</dbReference>
<dbReference type="InterPro" id="IPR014383">
    <property type="entry name" value="RNA-dir_poll_phytoreovirus"/>
</dbReference>
<dbReference type="PIRSF" id="PIRSF000822">
    <property type="entry name" value="RdRPol_RDV"/>
    <property type="match status" value="1"/>
</dbReference>
<dbReference type="SUPFAM" id="SSF56672">
    <property type="entry name" value="DNA/RNA polymerases"/>
    <property type="match status" value="1"/>
</dbReference>
<dbReference type="PROSITE" id="PS50523">
    <property type="entry name" value="RDRP_DSRNA_REO"/>
    <property type="match status" value="1"/>
</dbReference>
<proteinExistence type="evidence at transcript level"/>
<evidence type="ECO:0000250" key="1"/>
<evidence type="ECO:0000255" key="2">
    <source>
        <dbReference type="PROSITE-ProRule" id="PRU00539"/>
    </source>
</evidence>
<evidence type="ECO:0000256" key="3">
    <source>
        <dbReference type="SAM" id="MobiDB-lite"/>
    </source>
</evidence>
<evidence type="ECO:0000305" key="4"/>
<sequence>MDLARSDIIPHLLCLFQEIIQANIQKVSEAYDLELKIMNILTLWRNGSDNLISDNDDYMKKGLFFSRSNDPLALQARYAQMYDDLFKLNNYKVPDDVVRKHDTKILDIILKESSVPFWYDISDDEAHESMLPEFRLQDIHEFRLNLKRVAVVPDESEEIQMDESQSDKRRRKKRMEKSRPVWLSGSENDRRIELNDSLKPSQKFETKLSSYLLNRLMNEMNPHYCGHPLPALFVTLIMLKAYSLKNKFFSYGIRYMELVCNEIGGPDLNTRTFPVLFGSDGSFVGTRVYSHYPIKLRMILNDLTYLLTYSDLHKFQEFELDVNDEVLLHMLHSPNDGRQLKKAVTRLNLYYGLKFNPKTTDCGVVNGMDFTHKHPITKTADFTSPVLPMTNSFNKAEICYGHSSKILNRAVFTDTVRGYIREDLKNVADLDLPKLHEHVSKLVDMRVNYTIIYDLMFLRVMLNLGGYSRSNQITDFRKTIDEITKMNEDFLSGADPEKNIDILNAWMAPTMEDCGYRLTKSILFGKFRKAKYPSDLEAKSNIDYYVTARSAGIGNLRISIETDKRKYKVRTTSKSAFVNAMGSGILDVNPVSNEPMMLTDYLLTQTPETRANLEAAIDSGSISDSELMRILGQNSIGSRSTTAWRPVRPIYINVLQAHLAQAFIIGPHINATVNQHESQPTSLWFTGDDLGVGFATLYQNGTADIIAPAIEASSTGKALSVLADCSSWDQTFLTATIIPYYNGIKKALLEYQQADMRNFYMIDSSRTGVPGMKLSEIVDWFNSFQTKRIFNASYLKERHSFVVKYMWSGRLDTFFMNSVQNALITRRIAEEVSLKVSNTGLSWFQVAGDDAIMVYDGSSISTTEQVTRVNEITVRNYEESNHIINPQKTVISHISGEYAKIYYYAGMHFRDPSIQLHESEKDSGASDVTESLRGFGQVIYEYNKRAIGTLRVNALYGRLIAGLAYSVNVRRYDASKRTYANMKYYPPPTSVIAPAAFKGGLGLSFTGLSLNEVLFIKMHLHEAVSQGLHVISMISFEANEVVSNSLSAYYLKDQKDLLRDMKLGKHLEKVKGISFKSSDLAFSGSDFSQGLNLKRESIDKVKLEVSRKSIRDLRSSGISVPSTHAYENLPYASLHQSFKSLKVDRDTSKFTNERLLVSLLEYKSDIPRVSVTSQYPVYDLINISKVDELNVRSGGPVRFISTPIEGKLLEENIGTRQGVQFKNRGYGGSQEVLHFIRSNGLVITEQALIDLIIKSGVLLMINPQRGLIDLFQSLSGDTASSMHLANFFMAEKPHWEDNAISLTIAGSLLENCDSRIENVKNFVSVLATGMQKDLQRMFYYVGFVYYAQRLIWSGGHSSKIFVSIDEDKLADFLRGSKPITRRRKAMAGTKREPINLSANFSYEISEPDREISEYDPLVLCHPLSMPFFGNWQEKYSVMQSDEQM</sequence>
<reference key="1">
    <citation type="journal article" date="1992" name="Virology">
        <title>Molecular analysis of rice dwarf phytoreovirus segment S1: interviral homology of the putative RNA-dependent RNA polymerase between plant- and animal-infecting reoviruses.</title>
        <authorList>
            <person name="Suzuki N."/>
            <person name="Tanimura M."/>
            <person name="Watanabe Y."/>
            <person name="Kusano T."/>
            <person name="Kitagawa Y."/>
            <person name="Suda N."/>
            <person name="Kudo H."/>
            <person name="Uyeda I."/>
            <person name="Shikata E."/>
        </authorList>
    </citation>
    <scope>NUCLEOTIDE SEQUENCE [GENOMIC RNA]</scope>
    <source>
        <strain>isolate Akita</strain>
        <strain>Isolate H</strain>
    </source>
</reference>
<protein>
    <recommendedName>
        <fullName>RNA-directed RNA polymerase P1</fullName>
        <ecNumber>2.7.7.48</ecNumber>
    </recommendedName>
    <alternativeName>
        <fullName>Replicase</fullName>
    </alternativeName>
</protein>